<dbReference type="EC" id="7.1.1.-" evidence="1"/>
<dbReference type="EMBL" id="DQ400350">
    <property type="protein sequence ID" value="ABD48500.1"/>
    <property type="molecule type" value="Genomic_DNA"/>
</dbReference>
<dbReference type="RefSeq" id="YP_001595513.1">
    <property type="nucleotide sequence ID" value="NC_010109.1"/>
</dbReference>
<dbReference type="SMR" id="A9L9A1"/>
<dbReference type="GeneID" id="5787502"/>
<dbReference type="GO" id="GO:0009535">
    <property type="term" value="C:chloroplast thylakoid membrane"/>
    <property type="evidence" value="ECO:0007669"/>
    <property type="project" value="UniProtKB-SubCell"/>
</dbReference>
<dbReference type="GO" id="GO:0030964">
    <property type="term" value="C:NADH dehydrogenase complex"/>
    <property type="evidence" value="ECO:0007669"/>
    <property type="project" value="TreeGrafter"/>
</dbReference>
<dbReference type="GO" id="GO:0008137">
    <property type="term" value="F:NADH dehydrogenase (ubiquinone) activity"/>
    <property type="evidence" value="ECO:0007669"/>
    <property type="project" value="InterPro"/>
</dbReference>
<dbReference type="GO" id="GO:0048038">
    <property type="term" value="F:quinone binding"/>
    <property type="evidence" value="ECO:0007669"/>
    <property type="project" value="UniProtKB-KW"/>
</dbReference>
<dbReference type="GO" id="GO:0019684">
    <property type="term" value="P:photosynthesis, light reaction"/>
    <property type="evidence" value="ECO:0007669"/>
    <property type="project" value="UniProtKB-UniRule"/>
</dbReference>
<dbReference type="FunFam" id="1.20.58.1610:FF:000001">
    <property type="entry name" value="NAD(P)H-quinone oxidoreductase subunit 3, chloroplastic"/>
    <property type="match status" value="1"/>
</dbReference>
<dbReference type="Gene3D" id="1.20.58.1610">
    <property type="entry name" value="NADH:ubiquinone/plastoquinone oxidoreductase, chain 3"/>
    <property type="match status" value="1"/>
</dbReference>
<dbReference type="HAMAP" id="MF_01394">
    <property type="entry name" value="NDH1_NuoA"/>
    <property type="match status" value="1"/>
</dbReference>
<dbReference type="InterPro" id="IPR023043">
    <property type="entry name" value="NAD(P)H_OxRDtase_bac/plastid"/>
</dbReference>
<dbReference type="InterPro" id="IPR000440">
    <property type="entry name" value="NADH_UbQ/plastoQ_OxRdtase_su3"/>
</dbReference>
<dbReference type="InterPro" id="IPR038430">
    <property type="entry name" value="NDAH_ubi_oxred_su3_sf"/>
</dbReference>
<dbReference type="PANTHER" id="PTHR11058">
    <property type="entry name" value="NADH-UBIQUINONE OXIDOREDUCTASE CHAIN 3"/>
    <property type="match status" value="1"/>
</dbReference>
<dbReference type="PANTHER" id="PTHR11058:SF9">
    <property type="entry name" value="NADH-UBIQUINONE OXIDOREDUCTASE CHAIN 3"/>
    <property type="match status" value="1"/>
</dbReference>
<dbReference type="Pfam" id="PF00507">
    <property type="entry name" value="Oxidored_q4"/>
    <property type="match status" value="1"/>
</dbReference>
<proteinExistence type="inferred from homology"/>
<evidence type="ECO:0000255" key="1">
    <source>
        <dbReference type="HAMAP-Rule" id="MF_01394"/>
    </source>
</evidence>
<comment type="function">
    <text evidence="1">NDH shuttles electrons from NAD(P)H:plastoquinone, via FMN and iron-sulfur (Fe-S) centers, to quinones in the photosynthetic chain and possibly in a chloroplast respiratory chain. The immediate electron acceptor for the enzyme in this species is believed to be plastoquinone. Couples the redox reaction to proton translocation, and thus conserves the redox energy in a proton gradient.</text>
</comment>
<comment type="catalytic activity">
    <reaction evidence="1">
        <text>a plastoquinone + NADH + (n+1) H(+)(in) = a plastoquinol + NAD(+) + n H(+)(out)</text>
        <dbReference type="Rhea" id="RHEA:42608"/>
        <dbReference type="Rhea" id="RHEA-COMP:9561"/>
        <dbReference type="Rhea" id="RHEA-COMP:9562"/>
        <dbReference type="ChEBI" id="CHEBI:15378"/>
        <dbReference type="ChEBI" id="CHEBI:17757"/>
        <dbReference type="ChEBI" id="CHEBI:57540"/>
        <dbReference type="ChEBI" id="CHEBI:57945"/>
        <dbReference type="ChEBI" id="CHEBI:62192"/>
    </reaction>
</comment>
<comment type="catalytic activity">
    <reaction evidence="1">
        <text>a plastoquinone + NADPH + (n+1) H(+)(in) = a plastoquinol + NADP(+) + n H(+)(out)</text>
        <dbReference type="Rhea" id="RHEA:42612"/>
        <dbReference type="Rhea" id="RHEA-COMP:9561"/>
        <dbReference type="Rhea" id="RHEA-COMP:9562"/>
        <dbReference type="ChEBI" id="CHEBI:15378"/>
        <dbReference type="ChEBI" id="CHEBI:17757"/>
        <dbReference type="ChEBI" id="CHEBI:57783"/>
        <dbReference type="ChEBI" id="CHEBI:58349"/>
        <dbReference type="ChEBI" id="CHEBI:62192"/>
    </reaction>
</comment>
<comment type="subunit">
    <text evidence="1">NDH is composed of at least 16 different subunits, 5 of which are encoded in the nucleus.</text>
</comment>
<comment type="subcellular location">
    <subcellularLocation>
        <location evidence="1">Plastid</location>
        <location evidence="1">Chloroplast thylakoid membrane</location>
        <topology evidence="1">Multi-pass membrane protein</topology>
    </subcellularLocation>
</comment>
<comment type="similarity">
    <text evidence="1">Belongs to the complex I subunit 3 family.</text>
</comment>
<organism>
    <name type="scientific">Lemna minor</name>
    <name type="common">Common duckweed</name>
    <dbReference type="NCBI Taxonomy" id="4472"/>
    <lineage>
        <taxon>Eukaryota</taxon>
        <taxon>Viridiplantae</taxon>
        <taxon>Streptophyta</taxon>
        <taxon>Embryophyta</taxon>
        <taxon>Tracheophyta</taxon>
        <taxon>Spermatophyta</taxon>
        <taxon>Magnoliopsida</taxon>
        <taxon>Liliopsida</taxon>
        <taxon>Araceae</taxon>
        <taxon>Lemnoideae</taxon>
        <taxon>Lemna</taxon>
    </lineage>
</organism>
<gene>
    <name evidence="1" type="primary">ndhC</name>
</gene>
<reference key="1">
    <citation type="journal article" date="2008" name="J. Mol. Evol.">
        <title>Complete sequence of the Duckweed (Lemna minor) chloroplast genome: structural organization and phylogenetic relationships to other angiosperms.</title>
        <authorList>
            <person name="Mardanov A.V."/>
            <person name="Ravin N.V."/>
            <person name="Kuznetsov B.B."/>
            <person name="Samigullin T.H."/>
            <person name="Antonov A.S."/>
            <person name="Kolganova T.V."/>
            <person name="Skyabin K.G."/>
        </authorList>
    </citation>
    <scope>NUCLEOTIDE SEQUENCE [LARGE SCALE GENOMIC DNA]</scope>
</reference>
<feature type="chain" id="PRO_0000362844" description="NAD(P)H-quinone oxidoreductase subunit 3, chloroplastic">
    <location>
        <begin position="1"/>
        <end position="120"/>
    </location>
</feature>
<feature type="transmembrane region" description="Helical" evidence="1">
    <location>
        <begin position="9"/>
        <end position="29"/>
    </location>
</feature>
<feature type="transmembrane region" description="Helical" evidence="1">
    <location>
        <begin position="64"/>
        <end position="84"/>
    </location>
</feature>
<feature type="transmembrane region" description="Helical" evidence="1">
    <location>
        <begin position="88"/>
        <end position="108"/>
    </location>
</feature>
<accession>A9L9A1</accession>
<keyword id="KW-0150">Chloroplast</keyword>
<keyword id="KW-0472">Membrane</keyword>
<keyword id="KW-0520">NAD</keyword>
<keyword id="KW-0521">NADP</keyword>
<keyword id="KW-0934">Plastid</keyword>
<keyword id="KW-0618">Plastoquinone</keyword>
<keyword id="KW-0874">Quinone</keyword>
<keyword id="KW-0793">Thylakoid</keyword>
<keyword id="KW-1278">Translocase</keyword>
<keyword id="KW-0812">Transmembrane</keyword>
<keyword id="KW-1133">Transmembrane helix</keyword>
<keyword id="KW-0813">Transport</keyword>
<protein>
    <recommendedName>
        <fullName evidence="1">NAD(P)H-quinone oxidoreductase subunit 3, chloroplastic</fullName>
        <ecNumber evidence="1">7.1.1.-</ecNumber>
    </recommendedName>
    <alternativeName>
        <fullName evidence="1">NAD(P)H dehydrogenase subunit 3</fullName>
    </alternativeName>
    <alternativeName>
        <fullName evidence="1">NADH-plastoquinone oxidoreductase subunit 3</fullName>
    </alternativeName>
</protein>
<sequence>MFLLYEYDIFWAFLVISSVIPILAFIISGVLAPLSEGPEKLSSYESGIEPIGDAWVQFRIRYYMFALVFVVFDVETVFLYPWAMSFDVLGVSVFIEALIFVLILIVGSVYAWRKGALEWS</sequence>
<name>NU3C_LEMMI</name>
<geneLocation type="chloroplast"/>